<proteinExistence type="evidence at protein level"/>
<feature type="chain" id="PRO_0000056816" description="Cardiolipin synthase (CMP-forming)">
    <location>
        <begin position="1"/>
        <end position="301"/>
    </location>
</feature>
<feature type="transmembrane region" description="Helical" evidence="1">
    <location>
        <begin position="109"/>
        <end position="129"/>
    </location>
</feature>
<feature type="transmembrane region" description="Helical" evidence="1">
    <location>
        <begin position="133"/>
        <end position="153"/>
    </location>
</feature>
<feature type="transmembrane region" description="Helical" evidence="1">
    <location>
        <begin position="190"/>
        <end position="212"/>
    </location>
</feature>
<feature type="transmembrane region" description="Helical" evidence="1">
    <location>
        <begin position="250"/>
        <end position="270"/>
    </location>
</feature>
<feature type="transmembrane region" description="Helical" evidence="1">
    <location>
        <begin position="272"/>
        <end position="292"/>
    </location>
</feature>
<feature type="region of interest" description="Disordered" evidence="2">
    <location>
        <begin position="70"/>
        <end position="93"/>
    </location>
</feature>
<feature type="compositionally biased region" description="Low complexity" evidence="2">
    <location>
        <begin position="71"/>
        <end position="93"/>
    </location>
</feature>
<feature type="splice variant" id="VSP_041398" description="In isoform 2." evidence="7">
    <location>
        <begin position="1"/>
        <end position="99"/>
    </location>
</feature>
<feature type="splice variant" id="VSP_041399" description="In isoform 2." evidence="7">
    <original>PSL</original>
    <variation>MPQ</variation>
    <location>
        <begin position="100"/>
        <end position="102"/>
    </location>
</feature>
<feature type="sequence variant" id="VAR_087984" description="In COXPD57; decreased function in cardiolipin synthesis; reduced cardiolipin and increased phosphatidylglycerol levels in fibroblasts from a homozygous patient; dbSNP:rs1568615047." evidence="6">
    <original>I</original>
    <variation>N</variation>
    <location>
        <position position="109"/>
    </location>
</feature>
<feature type="sequence variant" id="VAR_087985" description="In COXPD57; uncertain significance; dbSNP:rs759395960." evidence="6">
    <original>A</original>
    <variation>D</variation>
    <location>
        <position position="172"/>
    </location>
</feature>
<feature type="sequence variant" id="VAR_087986" description="In COXPD57; uncertain significance; dbSNP:rs764608497." evidence="6">
    <original>L</original>
    <variation>F</variation>
    <location>
        <position position="217"/>
    </location>
</feature>
<name>CRLS1_HUMAN</name>
<reference key="1">
    <citation type="journal article" date="2006" name="FEBS Lett.">
        <title>Identification and characterization of human cardiolipin synthase.</title>
        <authorList>
            <person name="Houtkooper R.H."/>
            <person name="Akbari H."/>
            <person name="van Lenthe H."/>
            <person name="Kulik W."/>
            <person name="Wanders R.J.A."/>
            <person name="Frentzen M."/>
            <person name="Vaz F.M."/>
        </authorList>
    </citation>
    <scope>NUCLEOTIDE SEQUENCE [MRNA] (ISOFORM 1)</scope>
    <scope>FUNCTION</scope>
    <scope>CATALYTIC ACTIVITY</scope>
    <scope>COFACTOR</scope>
    <scope>PH DEPENDENCE</scope>
</reference>
<reference key="2">
    <citation type="submission" date="2000-03" db="EMBL/GenBank/DDBJ databases">
        <authorList>
            <person name="Cheng Z."/>
            <person name="Gao G."/>
            <person name="Peng Y."/>
            <person name="Ren S."/>
            <person name="Chen Z."/>
            <person name="Han Z."/>
        </authorList>
    </citation>
    <scope>NUCLEOTIDE SEQUENCE [MRNA] (ISOFORM 1)</scope>
    <source>
        <tissue>Liver cancer</tissue>
    </source>
</reference>
<reference key="3">
    <citation type="journal article" date="2001" name="Nature">
        <title>The DNA sequence and comparative analysis of human chromosome 20.</title>
        <authorList>
            <person name="Deloukas P."/>
            <person name="Matthews L.H."/>
            <person name="Ashurst J.L."/>
            <person name="Burton J."/>
            <person name="Gilbert J.G.R."/>
            <person name="Jones M."/>
            <person name="Stavrides G."/>
            <person name="Almeida J.P."/>
            <person name="Babbage A.K."/>
            <person name="Bagguley C.L."/>
            <person name="Bailey J."/>
            <person name="Barlow K.F."/>
            <person name="Bates K.N."/>
            <person name="Beard L.M."/>
            <person name="Beare D.M."/>
            <person name="Beasley O.P."/>
            <person name="Bird C.P."/>
            <person name="Blakey S.E."/>
            <person name="Bridgeman A.M."/>
            <person name="Brown A.J."/>
            <person name="Buck D."/>
            <person name="Burrill W.D."/>
            <person name="Butler A.P."/>
            <person name="Carder C."/>
            <person name="Carter N.P."/>
            <person name="Chapman J.C."/>
            <person name="Clamp M."/>
            <person name="Clark G."/>
            <person name="Clark L.N."/>
            <person name="Clark S.Y."/>
            <person name="Clee C.M."/>
            <person name="Clegg S."/>
            <person name="Cobley V.E."/>
            <person name="Collier R.E."/>
            <person name="Connor R.E."/>
            <person name="Corby N.R."/>
            <person name="Coulson A."/>
            <person name="Coville G.J."/>
            <person name="Deadman R."/>
            <person name="Dhami P.D."/>
            <person name="Dunn M."/>
            <person name="Ellington A.G."/>
            <person name="Frankland J.A."/>
            <person name="Fraser A."/>
            <person name="French L."/>
            <person name="Garner P."/>
            <person name="Grafham D.V."/>
            <person name="Griffiths C."/>
            <person name="Griffiths M.N.D."/>
            <person name="Gwilliam R."/>
            <person name="Hall R.E."/>
            <person name="Hammond S."/>
            <person name="Harley J.L."/>
            <person name="Heath P.D."/>
            <person name="Ho S."/>
            <person name="Holden J.L."/>
            <person name="Howden P.J."/>
            <person name="Huckle E."/>
            <person name="Hunt A.R."/>
            <person name="Hunt S.E."/>
            <person name="Jekosch K."/>
            <person name="Johnson C.M."/>
            <person name="Johnson D."/>
            <person name="Kay M.P."/>
            <person name="Kimberley A.M."/>
            <person name="King A."/>
            <person name="Knights A."/>
            <person name="Laird G.K."/>
            <person name="Lawlor S."/>
            <person name="Lehvaeslaiho M.H."/>
            <person name="Leversha M.A."/>
            <person name="Lloyd C."/>
            <person name="Lloyd D.M."/>
            <person name="Lovell J.D."/>
            <person name="Marsh V.L."/>
            <person name="Martin S.L."/>
            <person name="McConnachie L.J."/>
            <person name="McLay K."/>
            <person name="McMurray A.A."/>
            <person name="Milne S.A."/>
            <person name="Mistry D."/>
            <person name="Moore M.J.F."/>
            <person name="Mullikin J.C."/>
            <person name="Nickerson T."/>
            <person name="Oliver K."/>
            <person name="Parker A."/>
            <person name="Patel R."/>
            <person name="Pearce T.A.V."/>
            <person name="Peck A.I."/>
            <person name="Phillimore B.J.C.T."/>
            <person name="Prathalingam S.R."/>
            <person name="Plumb R.W."/>
            <person name="Ramsay H."/>
            <person name="Rice C.M."/>
            <person name="Ross M.T."/>
            <person name="Scott C.E."/>
            <person name="Sehra H.K."/>
            <person name="Shownkeen R."/>
            <person name="Sims S."/>
            <person name="Skuce C.D."/>
            <person name="Smith M.L."/>
            <person name="Soderlund C."/>
            <person name="Steward C.A."/>
            <person name="Sulston J.E."/>
            <person name="Swann R.M."/>
            <person name="Sycamore N."/>
            <person name="Taylor R."/>
            <person name="Tee L."/>
            <person name="Thomas D.W."/>
            <person name="Thorpe A."/>
            <person name="Tracey A."/>
            <person name="Tromans A.C."/>
            <person name="Vaudin M."/>
            <person name="Wall M."/>
            <person name="Wallis J.M."/>
            <person name="Whitehead S.L."/>
            <person name="Whittaker P."/>
            <person name="Willey D.L."/>
            <person name="Williams L."/>
            <person name="Williams S.A."/>
            <person name="Wilming L."/>
            <person name="Wray P.W."/>
            <person name="Hubbard T."/>
            <person name="Durbin R.M."/>
            <person name="Bentley D.R."/>
            <person name="Beck S."/>
            <person name="Rogers J."/>
        </authorList>
    </citation>
    <scope>NUCLEOTIDE SEQUENCE [LARGE SCALE GENOMIC DNA]</scope>
</reference>
<reference key="4">
    <citation type="submission" date="2005-09" db="EMBL/GenBank/DDBJ databases">
        <authorList>
            <person name="Mural R.J."/>
            <person name="Istrail S."/>
            <person name="Sutton G.G."/>
            <person name="Florea L."/>
            <person name="Halpern A.L."/>
            <person name="Mobarry C.M."/>
            <person name="Lippert R."/>
            <person name="Walenz B."/>
            <person name="Shatkay H."/>
            <person name="Dew I."/>
            <person name="Miller J.R."/>
            <person name="Flanigan M.J."/>
            <person name="Edwards N.J."/>
            <person name="Bolanos R."/>
            <person name="Fasulo D."/>
            <person name="Halldorsson B.V."/>
            <person name="Hannenhalli S."/>
            <person name="Turner R."/>
            <person name="Yooseph S."/>
            <person name="Lu F."/>
            <person name="Nusskern D.R."/>
            <person name="Shue B.C."/>
            <person name="Zheng X.H."/>
            <person name="Zhong F."/>
            <person name="Delcher A.L."/>
            <person name="Huson D.H."/>
            <person name="Kravitz S.A."/>
            <person name="Mouchard L."/>
            <person name="Reinert K."/>
            <person name="Remington K.A."/>
            <person name="Clark A.G."/>
            <person name="Waterman M.S."/>
            <person name="Eichler E.E."/>
            <person name="Adams M.D."/>
            <person name="Hunkapiller M.W."/>
            <person name="Myers E.W."/>
            <person name="Venter J.C."/>
        </authorList>
    </citation>
    <scope>NUCLEOTIDE SEQUENCE [LARGE SCALE GENOMIC DNA]</scope>
</reference>
<reference key="5">
    <citation type="journal article" date="2007" name="BMC Genomics">
        <title>The full-ORF clone resource of the German cDNA consortium.</title>
        <authorList>
            <person name="Bechtel S."/>
            <person name="Rosenfelder H."/>
            <person name="Duda A."/>
            <person name="Schmidt C.P."/>
            <person name="Ernst U."/>
            <person name="Wellenreuther R."/>
            <person name="Mehrle A."/>
            <person name="Schuster C."/>
            <person name="Bahr A."/>
            <person name="Bloecker H."/>
            <person name="Heubner D."/>
            <person name="Hoerlein A."/>
            <person name="Michel G."/>
            <person name="Wedler H."/>
            <person name="Koehrer K."/>
            <person name="Ottenwaelder B."/>
            <person name="Poustka A."/>
            <person name="Wiemann S."/>
            <person name="Schupp I."/>
        </authorList>
    </citation>
    <scope>NUCLEOTIDE SEQUENCE [LARGE SCALE MRNA] OF 28-301 (ISOFORM 1)</scope>
    <source>
        <tissue>Melanoma</tissue>
    </source>
</reference>
<reference key="6">
    <citation type="journal article" date="2006" name="Biochem. J.">
        <title>Identification and functional characterization of hCLS1, a human cardiolipin synthase localized in mitochondria.</title>
        <authorList>
            <person name="Chen D."/>
            <person name="Zhang X.Y."/>
            <person name="Shi Y."/>
        </authorList>
    </citation>
    <scope>FUNCTION</scope>
    <scope>CATALYTIC ACTIVITY</scope>
    <scope>SUBCELLULAR LOCATION</scope>
</reference>
<reference key="7">
    <citation type="journal article" date="2006" name="J. Lipid Res.">
        <title>Cloning and characterization of a cDNA encoding human cardiolipin synthase (hCLS1).</title>
        <authorList>
            <person name="Lu B."/>
            <person name="Xu F.Y."/>
            <person name="Jiang Y.J."/>
            <person name="Choy P.C."/>
            <person name="Hatch G.M."/>
            <person name="Grunfeld C."/>
            <person name="Feingold K.R."/>
        </authorList>
    </citation>
    <scope>FUNCTION</scope>
    <scope>SUBCELLULAR LOCATION</scope>
    <scope>TISSUE SPECIFICITY</scope>
</reference>
<reference key="8">
    <citation type="journal article" date="2022" name="Hum. Mol. Genet.">
        <title>Deleterious variants in CRLS1 lead to cardiolipin deficiency and cause an autosomal recessive multi-system mitochondrial disease.</title>
        <authorList>
            <consortium name="Care4Rare Canada Consortium"/>
            <person name="Lee R.G."/>
            <person name="Balasubramaniam S."/>
            <person name="Stentenbach M."/>
            <person name="Kralj T."/>
            <person name="McCubbin T."/>
            <person name="Padman B."/>
            <person name="Smith J."/>
            <person name="Riley L.G."/>
            <person name="Priyadarshi A."/>
            <person name="Peng L."/>
            <person name="Nuske M.R."/>
            <person name="Webster R."/>
            <person name="Peacock K."/>
            <person name="Roberts P."/>
            <person name="Stark Z."/>
            <person name="Lemire G."/>
            <person name="Ito Y.A."/>
            <person name="Boycott K.M."/>
            <person name="Geraghty M.T."/>
            <person name="van Klinken J.B."/>
            <person name="Ferdinandusse S."/>
            <person name="Zhu Y."/>
            <person name="Walsh R."/>
            <person name="Marcellin E."/>
            <person name="Thorburn D.R."/>
            <person name="Roscioli T."/>
            <person name="Fletcher J."/>
            <person name="Rackham O."/>
            <person name="Vaz F.M."/>
            <person name="Reid G.E."/>
            <person name="Filipovska A."/>
        </authorList>
    </citation>
    <scope>INVOLVEMENT IN COXPD57</scope>
    <scope>VARIANTS COXPD57 ASN-109; ASP-172 AND PHE-217</scope>
    <scope>CHARACTERIZATION OF VARIANT COXPD57 ASN-109</scope>
    <scope>FUNCTION</scope>
</reference>
<reference key="9">
    <citation type="journal article" date="2023" name="Hum. Mol. Genet.">
        <authorList>
            <consortium name="Care4Rare Canada Consortium"/>
            <person name="Lee R.G."/>
            <person name="Balasubramaniam S."/>
            <person name="Stentenbach M."/>
            <person name="Kralj T."/>
            <person name="McCubbin T."/>
            <person name="Padman B."/>
            <person name="Smith J."/>
            <person name="Riley L.G."/>
            <person name="Priyadarshi A."/>
            <person name="Peng L."/>
            <person name="Nuske M.R."/>
            <person name="Webster R."/>
            <person name="Peacock K."/>
            <person name="Roberts P."/>
            <person name="Stark Z."/>
            <person name="Lemire G."/>
            <person name="Ito Y.A."/>
            <person name="Boycott K.M."/>
            <person name="Geraghty M.T."/>
            <person name="van Klinken J.B."/>
            <person name="Ferdinandusse S."/>
            <person name="Zhu Y."/>
            <person name="Walsh R."/>
            <person name="Marcellin E."/>
            <person name="Thorburn D.R."/>
            <person name="Roscioli T."/>
            <person name="Fletcher J."/>
            <person name="Rackham O."/>
            <person name="Vaz F.M."/>
            <person name="Reid G.E."/>
            <person name="Filipovska A."/>
        </authorList>
    </citation>
    <scope>ERRATUM OF PUBMED:35147173</scope>
</reference>
<evidence type="ECO:0000255" key="1"/>
<evidence type="ECO:0000256" key="2">
    <source>
        <dbReference type="SAM" id="MobiDB-lite"/>
    </source>
</evidence>
<evidence type="ECO:0000269" key="3">
    <source>
    </source>
</evidence>
<evidence type="ECO:0000269" key="4">
    <source>
    </source>
</evidence>
<evidence type="ECO:0000269" key="5">
    <source>
    </source>
</evidence>
<evidence type="ECO:0000269" key="6">
    <source>
    </source>
</evidence>
<evidence type="ECO:0000305" key="7"/>
<evidence type="ECO:0000305" key="8">
    <source>
    </source>
</evidence>
<keyword id="KW-0025">Alternative splicing</keyword>
<keyword id="KW-0225">Disease variant</keyword>
<keyword id="KW-0444">Lipid biosynthesis</keyword>
<keyword id="KW-0443">Lipid metabolism</keyword>
<keyword id="KW-0472">Membrane</keyword>
<keyword id="KW-0496">Mitochondrion</keyword>
<keyword id="KW-0999">Mitochondrion inner membrane</keyword>
<keyword id="KW-0594">Phospholipid biosynthesis</keyword>
<keyword id="KW-1208">Phospholipid metabolism</keyword>
<keyword id="KW-1274">Primary mitochondrial disease</keyword>
<keyword id="KW-1267">Proteomics identification</keyword>
<keyword id="KW-1185">Reference proteome</keyword>
<keyword id="KW-0808">Transferase</keyword>
<keyword id="KW-0812">Transmembrane</keyword>
<keyword id="KW-1133">Transmembrane helix</keyword>
<dbReference type="EC" id="2.7.8.41" evidence="4 5"/>
<dbReference type="EMBL" id="DQ386730">
    <property type="protein sequence ID" value="ABD46888.1"/>
    <property type="molecule type" value="mRNA"/>
</dbReference>
<dbReference type="EMBL" id="AF241784">
    <property type="protein sequence ID" value="AAG44472.1"/>
    <property type="molecule type" value="mRNA"/>
</dbReference>
<dbReference type="EMBL" id="AL035461">
    <property type="status" value="NOT_ANNOTATED_CDS"/>
    <property type="molecule type" value="Genomic_DNA"/>
</dbReference>
<dbReference type="EMBL" id="CH471133">
    <property type="protein sequence ID" value="EAX10401.1"/>
    <property type="molecule type" value="Genomic_DNA"/>
</dbReference>
<dbReference type="EMBL" id="CH471133">
    <property type="protein sequence ID" value="EAX10402.1"/>
    <property type="molecule type" value="Genomic_DNA"/>
</dbReference>
<dbReference type="EMBL" id="AL832419">
    <property type="protein sequence ID" value="CAH10649.1"/>
    <property type="molecule type" value="mRNA"/>
</dbReference>
<dbReference type="CCDS" id="CCDS13096.1">
    <molecule id="Q9UJA2-1"/>
</dbReference>
<dbReference type="CCDS" id="CCDS46578.1">
    <molecule id="Q9UJA2-2"/>
</dbReference>
<dbReference type="RefSeq" id="NP_001120930.1">
    <molecule id="Q9UJA2-2"/>
    <property type="nucleotide sequence ID" value="NM_001127458.2"/>
</dbReference>
<dbReference type="RefSeq" id="NP_001310490.1">
    <property type="nucleotide sequence ID" value="NM_001323561.1"/>
</dbReference>
<dbReference type="RefSeq" id="NP_001310491.1">
    <property type="nucleotide sequence ID" value="NM_001323562.1"/>
</dbReference>
<dbReference type="RefSeq" id="NP_001310492.1">
    <property type="nucleotide sequence ID" value="NM_001323563.1"/>
</dbReference>
<dbReference type="RefSeq" id="NP_001310493.1">
    <property type="nucleotide sequence ID" value="NM_001323564.1"/>
</dbReference>
<dbReference type="RefSeq" id="NP_061968.1">
    <molecule id="Q9UJA2-1"/>
    <property type="nucleotide sequence ID" value="NM_019095.6"/>
</dbReference>
<dbReference type="SMR" id="Q9UJA2"/>
<dbReference type="BioGRID" id="120096">
    <property type="interactions" value="5"/>
</dbReference>
<dbReference type="FunCoup" id="Q9UJA2">
    <property type="interactions" value="1607"/>
</dbReference>
<dbReference type="IntAct" id="Q9UJA2">
    <property type="interactions" value="1"/>
</dbReference>
<dbReference type="MINT" id="Q9UJA2"/>
<dbReference type="STRING" id="9606.ENSP00000368140"/>
<dbReference type="SwissLipids" id="SLP:000000125"/>
<dbReference type="GlyGen" id="Q9UJA2">
    <property type="glycosylation" value="1 site"/>
</dbReference>
<dbReference type="iPTMnet" id="Q9UJA2"/>
<dbReference type="PhosphoSitePlus" id="Q9UJA2"/>
<dbReference type="BioMuta" id="CRLS1"/>
<dbReference type="DMDM" id="37537857"/>
<dbReference type="jPOST" id="Q9UJA2"/>
<dbReference type="MassIVE" id="Q9UJA2"/>
<dbReference type="PaxDb" id="9606-ENSP00000368140"/>
<dbReference type="PeptideAtlas" id="Q9UJA2"/>
<dbReference type="ProteomicsDB" id="84608">
    <molecule id="Q9UJA2-1"/>
</dbReference>
<dbReference type="ProteomicsDB" id="84609">
    <molecule id="Q9UJA2-2"/>
</dbReference>
<dbReference type="Pumba" id="Q9UJA2"/>
<dbReference type="Antibodypedia" id="23985">
    <property type="antibodies" value="136 antibodies from 26 providers"/>
</dbReference>
<dbReference type="DNASU" id="54675"/>
<dbReference type="Ensembl" id="ENST00000378863.9">
    <molecule id="Q9UJA2-1"/>
    <property type="protein sequence ID" value="ENSP00000368140.4"/>
    <property type="gene ID" value="ENSG00000088766.12"/>
</dbReference>
<dbReference type="Ensembl" id="ENST00000378868.4">
    <molecule id="Q9UJA2-2"/>
    <property type="protein sequence ID" value="ENSP00000368145.3"/>
    <property type="gene ID" value="ENSG00000088766.12"/>
</dbReference>
<dbReference type="GeneID" id="54675"/>
<dbReference type="KEGG" id="hsa:54675"/>
<dbReference type="MANE-Select" id="ENST00000378863.9">
    <property type="protein sequence ID" value="ENSP00000368140.4"/>
    <property type="RefSeq nucleotide sequence ID" value="NM_019095.6"/>
    <property type="RefSeq protein sequence ID" value="NP_061968.1"/>
</dbReference>
<dbReference type="UCSC" id="uc002wmn.5">
    <molecule id="Q9UJA2-1"/>
    <property type="organism name" value="human"/>
</dbReference>
<dbReference type="AGR" id="HGNC:16148"/>
<dbReference type="CTD" id="54675"/>
<dbReference type="DisGeNET" id="54675"/>
<dbReference type="GeneCards" id="CRLS1"/>
<dbReference type="HGNC" id="HGNC:16148">
    <property type="gene designation" value="CRLS1"/>
</dbReference>
<dbReference type="HPA" id="ENSG00000088766">
    <property type="expression patterns" value="Tissue enhanced (liver)"/>
</dbReference>
<dbReference type="MalaCards" id="CRLS1"/>
<dbReference type="MIM" id="608188">
    <property type="type" value="gene"/>
</dbReference>
<dbReference type="MIM" id="620167">
    <property type="type" value="phenotype"/>
</dbReference>
<dbReference type="neXtProt" id="NX_Q9UJA2"/>
<dbReference type="OpenTargets" id="ENSG00000088766"/>
<dbReference type="PharmGKB" id="PA25697"/>
<dbReference type="VEuPathDB" id="HostDB:ENSG00000088766"/>
<dbReference type="eggNOG" id="KOG1617">
    <property type="taxonomic scope" value="Eukaryota"/>
</dbReference>
<dbReference type="GeneTree" id="ENSGT00390000001607"/>
<dbReference type="HOGENOM" id="CLU_051314_0_1_1"/>
<dbReference type="InParanoid" id="Q9UJA2"/>
<dbReference type="OMA" id="KRFNMAS"/>
<dbReference type="OrthoDB" id="10020554at2759"/>
<dbReference type="PAN-GO" id="Q9UJA2">
    <property type="GO annotations" value="3 GO annotations based on evolutionary models"/>
</dbReference>
<dbReference type="PhylomeDB" id="Q9UJA2"/>
<dbReference type="TreeFam" id="TF314169"/>
<dbReference type="BRENDA" id="2.7.8.41">
    <property type="organism ID" value="2681"/>
</dbReference>
<dbReference type="PathwayCommons" id="Q9UJA2"/>
<dbReference type="Reactome" id="R-HSA-1482925">
    <property type="pathway name" value="Acyl chain remodelling of PG"/>
</dbReference>
<dbReference type="Reactome" id="R-HSA-1483076">
    <property type="pathway name" value="Synthesis of CL"/>
</dbReference>
<dbReference type="SignaLink" id="Q9UJA2"/>
<dbReference type="SIGNOR" id="Q9UJA2"/>
<dbReference type="BioGRID-ORCS" id="54675">
    <property type="hits" value="478 hits in 1163 CRISPR screens"/>
</dbReference>
<dbReference type="ChiTaRS" id="CRLS1">
    <property type="organism name" value="human"/>
</dbReference>
<dbReference type="GenomeRNAi" id="54675"/>
<dbReference type="Pharos" id="Q9UJA2">
    <property type="development level" value="Tbio"/>
</dbReference>
<dbReference type="PRO" id="PR:Q9UJA2"/>
<dbReference type="Proteomes" id="UP000005640">
    <property type="component" value="Chromosome 20"/>
</dbReference>
<dbReference type="RNAct" id="Q9UJA2">
    <property type="molecule type" value="protein"/>
</dbReference>
<dbReference type="Bgee" id="ENSG00000088766">
    <property type="expression patterns" value="Expressed in right lobe of liver and 98 other cell types or tissues"/>
</dbReference>
<dbReference type="ExpressionAtlas" id="Q9UJA2">
    <property type="expression patterns" value="baseline and differential"/>
</dbReference>
<dbReference type="GO" id="GO:0005743">
    <property type="term" value="C:mitochondrial inner membrane"/>
    <property type="evidence" value="ECO:0000250"/>
    <property type="project" value="UniProtKB"/>
</dbReference>
<dbReference type="GO" id="GO:0005739">
    <property type="term" value="C:mitochondrion"/>
    <property type="evidence" value="ECO:0000314"/>
    <property type="project" value="UniProtKB"/>
</dbReference>
<dbReference type="GO" id="GO:0003841">
    <property type="term" value="F:1-acylglycerol-3-phosphate O-acyltransferase activity"/>
    <property type="evidence" value="ECO:0000304"/>
    <property type="project" value="Reactome"/>
</dbReference>
<dbReference type="GO" id="GO:0047144">
    <property type="term" value="F:2-acylglycerol-3-phosphate O-acyltransferase activity"/>
    <property type="evidence" value="ECO:0000304"/>
    <property type="project" value="Reactome"/>
</dbReference>
<dbReference type="GO" id="GO:0043337">
    <property type="term" value="F:cardiolipin synthase (CMP-forming)"/>
    <property type="evidence" value="ECO:0000314"/>
    <property type="project" value="UniProtKB"/>
</dbReference>
<dbReference type="GO" id="GO:0032049">
    <property type="term" value="P:cardiolipin biosynthetic process"/>
    <property type="evidence" value="ECO:0000314"/>
    <property type="project" value="UniProtKB"/>
</dbReference>
<dbReference type="GO" id="GO:0036148">
    <property type="term" value="P:phosphatidylglycerol acyl-chain remodeling"/>
    <property type="evidence" value="ECO:0000304"/>
    <property type="project" value="Reactome"/>
</dbReference>
<dbReference type="FunFam" id="1.20.120.1760:FF:000005">
    <property type="entry name" value="Cardiolipin synthase 1"/>
    <property type="match status" value="1"/>
</dbReference>
<dbReference type="Gene3D" id="1.20.120.1760">
    <property type="match status" value="1"/>
</dbReference>
<dbReference type="InterPro" id="IPR050324">
    <property type="entry name" value="CDP-alcohol_PTase-I"/>
</dbReference>
<dbReference type="InterPro" id="IPR000462">
    <property type="entry name" value="CDP-OH_P_trans"/>
</dbReference>
<dbReference type="InterPro" id="IPR043130">
    <property type="entry name" value="CDP-OH_PTrfase_TM_dom"/>
</dbReference>
<dbReference type="PANTHER" id="PTHR14269:SF60">
    <property type="entry name" value="CARDIOLIPIN SYNTHASE (CMP-FORMING)"/>
    <property type="match status" value="1"/>
</dbReference>
<dbReference type="PANTHER" id="PTHR14269">
    <property type="entry name" value="CDP-DIACYLGLYCEROL--GLYCEROL-3-PHOSPHATE 3-PHOSPHATIDYLTRANSFERASE-RELATED"/>
    <property type="match status" value="1"/>
</dbReference>
<dbReference type="Pfam" id="PF01066">
    <property type="entry name" value="CDP-OH_P_transf"/>
    <property type="match status" value="1"/>
</dbReference>
<accession>Q9UJA2</accession>
<accession>D3DW09</accession>
<accession>E9PAT4</accession>
<accession>Q27RP0</accession>
<accession>Q69YQ5</accession>
<sequence length="301" mass="32593">MLALRVARGSWGALRGAAWAPGTRPSKRRACWALLPPVPCCLGCLAERWRLRPAALGLRLPGIGQRNHCSGAGKAAPRPAAGAGAAAEAPGGQWGPASTPSLYENPWTIPNMLSMTRIGLAPVLGYLIIEEDFNIALGVFALAGLTDLLDGFIARNWANQRSALGSALDPLADKILISILYVSLTYADLIPVPLTYMIISRDVMLIAAVFYVRYRTLPTPRTLAKYFNPCYATARLKPTFISKVNTAVQLILVAASLAAPVFNYADSIYLQILWCFTAFTTAASAYSYYHYGRKTVQVIKD</sequence>
<organism>
    <name type="scientific">Homo sapiens</name>
    <name type="common">Human</name>
    <dbReference type="NCBI Taxonomy" id="9606"/>
    <lineage>
        <taxon>Eukaryota</taxon>
        <taxon>Metazoa</taxon>
        <taxon>Chordata</taxon>
        <taxon>Craniata</taxon>
        <taxon>Vertebrata</taxon>
        <taxon>Euteleostomi</taxon>
        <taxon>Mammalia</taxon>
        <taxon>Eutheria</taxon>
        <taxon>Euarchontoglires</taxon>
        <taxon>Primates</taxon>
        <taxon>Haplorrhini</taxon>
        <taxon>Catarrhini</taxon>
        <taxon>Hominidae</taxon>
        <taxon>Homo</taxon>
    </lineage>
</organism>
<comment type="function">
    <text evidence="3 4 5 6">Catalyzes the synthesis of cardiolipin (CL) (diphosphatidylglycerol) by specifically transferring a phosphatidyl group from CDP-diacylglycerol to phosphatidylglycerol (PG) (PubMed:16547353, PubMed:16678169, PubMed:16716149, PubMed:35147173). CL is a key phospholipid in mitochondrial membranes and plays important roles in maintaining the functional integrity and dynamics of mitochondria under both optimal and stress conditions (PubMed:35147173).</text>
</comment>
<comment type="catalytic activity">
    <reaction evidence="4 5">
        <text>a CDP-1,2-diacyl-sn-glycerol + a 1,2-diacyl-sn-glycero-3-phospho-(1'-sn-glycerol) = a cardiolipin + CMP + H(+)</text>
        <dbReference type="Rhea" id="RHEA:32931"/>
        <dbReference type="ChEBI" id="CHEBI:15378"/>
        <dbReference type="ChEBI" id="CHEBI:58332"/>
        <dbReference type="ChEBI" id="CHEBI:60377"/>
        <dbReference type="ChEBI" id="CHEBI:62237"/>
        <dbReference type="ChEBI" id="CHEBI:64716"/>
        <dbReference type="EC" id="2.7.8.41"/>
    </reaction>
</comment>
<comment type="cofactor">
    <cofactor evidence="4">
        <name>a divalent metal cation</name>
        <dbReference type="ChEBI" id="CHEBI:60240"/>
    </cofactor>
</comment>
<comment type="biophysicochemical properties">
    <phDependence>
        <text evidence="4">Optimum pH is 8.2.</text>
    </phDependence>
</comment>
<comment type="subcellular location">
    <subcellularLocation>
        <location evidence="3 8">Mitochondrion inner membrane</location>
        <topology evidence="3">Multi-pass membrane protein</topology>
    </subcellularLocation>
</comment>
<comment type="alternative products">
    <event type="alternative splicing"/>
    <isoform>
        <id>Q9UJA2-1</id>
        <name>1</name>
        <sequence type="displayed"/>
    </isoform>
    <isoform>
        <id>Q9UJA2-2</id>
        <name>2</name>
        <sequence type="described" ref="VSP_041398 VSP_041399"/>
    </isoform>
</comment>
<comment type="tissue specificity">
    <text evidence="3">Highly expressed in tissues such as heart, skeletal muscle and liver.</text>
</comment>
<comment type="disease" evidence="6">
    <disease id="DI-06577">
        <name>Combined oxidative phosphorylation deficiency 57</name>
        <acronym>COXPD57</acronym>
        <description>An autosomal recessive mitochondrial disease characterized by multisystemic features including encephalopathy, neurodevelopmental regression, ocular anomalies, decreased vision, auditory neuropathy, sensorineural hearing loss, and cardiac defects. Disease severity is variable, ranging from premature death in infancy to permanent disability in young adulthood.</description>
        <dbReference type="MIM" id="620167"/>
    </disease>
    <text>The disease is caused by variants affecting the gene represented in this entry.</text>
</comment>
<comment type="similarity">
    <text evidence="7">Belongs to the CDP-alcohol phosphatidyltransferase class-I family.</text>
</comment>
<protein>
    <recommendedName>
        <fullName>Cardiolipin synthase (CMP-forming)</fullName>
        <shortName>CLS</shortName>
        <ecNumber evidence="4 5">2.7.8.41</ecNumber>
    </recommendedName>
    <alternativeName>
        <fullName>Protein GCD10 homolog</fullName>
    </alternativeName>
</protein>
<gene>
    <name type="primary">CRLS1</name>
    <name type="synonym">C20orf155</name>
    <name type="synonym">CLS1</name>
</gene>